<proteinExistence type="inferred from homology"/>
<accession>P0ADN5</accession>
<accession>P27827</accession>
<keyword id="KW-1185">Reference proteome</keyword>
<comment type="function">
    <text evidence="2">Involved in the organization of the Ori region of the chromosome into a macrodomain (MD) (By similarity). It constrains DNA mobility in the Ori macrodomain and limits long-distance DNA interactions with other chromosomal regions (By similarity).</text>
</comment>
<comment type="similarity">
    <text evidence="4">Belongs to the MaoP family.</text>
</comment>
<protein>
    <recommendedName>
        <fullName evidence="2">Macrodomain Ori protein</fullName>
    </recommendedName>
</protein>
<gene>
    <name evidence="2" type="primary">maoP</name>
    <name type="synonym">yifE</name>
    <name type="ordered locus">SF3840</name>
    <name type="ordered locus">S3920</name>
</gene>
<dbReference type="EMBL" id="AE005674">
    <property type="protein sequence ID" value="AAN45278.1"/>
    <property type="molecule type" value="Genomic_DNA"/>
</dbReference>
<dbReference type="EMBL" id="AE014073">
    <property type="protein sequence ID" value="AAP18919.1"/>
    <property type="molecule type" value="Genomic_DNA"/>
</dbReference>
<dbReference type="RefSeq" id="NP_709571.1">
    <property type="nucleotide sequence ID" value="NC_004337.2"/>
</dbReference>
<dbReference type="SMR" id="P0ADN5"/>
<dbReference type="STRING" id="198214.SF3840"/>
<dbReference type="PaxDb" id="198214-SF3840"/>
<dbReference type="GeneID" id="1026009"/>
<dbReference type="KEGG" id="sfl:SF3840"/>
<dbReference type="KEGG" id="sfx:S3920"/>
<dbReference type="PATRIC" id="fig|198214.7.peg.4531"/>
<dbReference type="HOGENOM" id="CLU_144599_2_2_6"/>
<dbReference type="Proteomes" id="UP000001006">
    <property type="component" value="Chromosome"/>
</dbReference>
<dbReference type="Proteomes" id="UP000002673">
    <property type="component" value="Chromosome"/>
</dbReference>
<dbReference type="InterPro" id="IPR007335">
    <property type="entry name" value="DUF413"/>
</dbReference>
<dbReference type="NCBIfam" id="NF008251">
    <property type="entry name" value="PRK11027.1-1"/>
    <property type="match status" value="1"/>
</dbReference>
<dbReference type="NCBIfam" id="NF008252">
    <property type="entry name" value="PRK11027.1-2"/>
    <property type="match status" value="1"/>
</dbReference>
<dbReference type="NCBIfam" id="NF008253">
    <property type="entry name" value="PRK11027.1-4"/>
    <property type="match status" value="1"/>
</dbReference>
<dbReference type="Pfam" id="PF04219">
    <property type="entry name" value="DUF413"/>
    <property type="match status" value="1"/>
</dbReference>
<reference key="1">
    <citation type="journal article" date="2002" name="Nucleic Acids Res.">
        <title>Genome sequence of Shigella flexneri 2a: insights into pathogenicity through comparison with genomes of Escherichia coli K12 and O157.</title>
        <authorList>
            <person name="Jin Q."/>
            <person name="Yuan Z."/>
            <person name="Xu J."/>
            <person name="Wang Y."/>
            <person name="Shen Y."/>
            <person name="Lu W."/>
            <person name="Wang J."/>
            <person name="Liu H."/>
            <person name="Yang J."/>
            <person name="Yang F."/>
            <person name="Zhang X."/>
            <person name="Zhang J."/>
            <person name="Yang G."/>
            <person name="Wu H."/>
            <person name="Qu D."/>
            <person name="Dong J."/>
            <person name="Sun L."/>
            <person name="Xue Y."/>
            <person name="Zhao A."/>
            <person name="Gao Y."/>
            <person name="Zhu J."/>
            <person name="Kan B."/>
            <person name="Ding K."/>
            <person name="Chen S."/>
            <person name="Cheng H."/>
            <person name="Yao Z."/>
            <person name="He B."/>
            <person name="Chen R."/>
            <person name="Ma D."/>
            <person name="Qiang B."/>
            <person name="Wen Y."/>
            <person name="Hou Y."/>
            <person name="Yu J."/>
        </authorList>
    </citation>
    <scope>NUCLEOTIDE SEQUENCE [LARGE SCALE GENOMIC DNA]</scope>
    <source>
        <strain>301 / Serotype 2a</strain>
    </source>
</reference>
<reference key="2">
    <citation type="journal article" date="2003" name="Infect. Immun.">
        <title>Complete genome sequence and comparative genomics of Shigella flexneri serotype 2a strain 2457T.</title>
        <authorList>
            <person name="Wei J."/>
            <person name="Goldberg M.B."/>
            <person name="Burland V."/>
            <person name="Venkatesan M.M."/>
            <person name="Deng W."/>
            <person name="Fournier G."/>
            <person name="Mayhew G.F."/>
            <person name="Plunkett G. III"/>
            <person name="Rose D.J."/>
            <person name="Darling A."/>
            <person name="Mau B."/>
            <person name="Perna N.T."/>
            <person name="Payne S.M."/>
            <person name="Runyen-Janecky L.J."/>
            <person name="Zhou S."/>
            <person name="Schwartz D.C."/>
            <person name="Blattner F.R."/>
        </authorList>
    </citation>
    <scope>NUCLEOTIDE SEQUENCE [LARGE SCALE GENOMIC DNA]</scope>
    <source>
        <strain>ATCC 700930 / 2457T / Serotype 2a</strain>
    </source>
</reference>
<name>MAOP_SHIFL</name>
<organism>
    <name type="scientific">Shigella flexneri</name>
    <dbReference type="NCBI Taxonomy" id="623"/>
    <lineage>
        <taxon>Bacteria</taxon>
        <taxon>Pseudomonadati</taxon>
        <taxon>Pseudomonadota</taxon>
        <taxon>Gammaproteobacteria</taxon>
        <taxon>Enterobacterales</taxon>
        <taxon>Enterobacteriaceae</taxon>
        <taxon>Shigella</taxon>
    </lineage>
</organism>
<sequence>MAESFTTTNRYFDNKHYPRGFSRHGDFTIKEAQLLERHGYAFNELDLGKREPVTEEEKLFVAVCRGEREPVTEAERVWSKYMTRIKRPKRFHTLSGGKPQVEGAEDYTDSDD</sequence>
<evidence type="ECO:0000250" key="1"/>
<evidence type="ECO:0000250" key="2">
    <source>
        <dbReference type="UniProtKB" id="P0ADN2"/>
    </source>
</evidence>
<evidence type="ECO:0000256" key="3">
    <source>
        <dbReference type="SAM" id="MobiDB-lite"/>
    </source>
</evidence>
<evidence type="ECO:0000305" key="4"/>
<feature type="initiator methionine" description="Removed" evidence="1">
    <location>
        <position position="1"/>
    </location>
</feature>
<feature type="chain" id="PRO_0000169644" description="Macrodomain Ori protein">
    <location>
        <begin position="2"/>
        <end position="112"/>
    </location>
</feature>
<feature type="region of interest" description="Disordered" evidence="3">
    <location>
        <begin position="91"/>
        <end position="112"/>
    </location>
</feature>
<feature type="compositionally biased region" description="Acidic residues" evidence="3">
    <location>
        <begin position="103"/>
        <end position="112"/>
    </location>
</feature>